<keyword id="KW-1185">Reference proteome</keyword>
<protein>
    <recommendedName>
        <fullName>Protein FAM106A</fullName>
    </recommendedName>
</protein>
<dbReference type="EMBL" id="AK021862">
    <property type="protein sequence ID" value="BAB13918.1"/>
    <property type="molecule type" value="mRNA"/>
</dbReference>
<dbReference type="EMBL" id="AC107983">
    <property type="status" value="NOT_ANNOTATED_CDS"/>
    <property type="molecule type" value="Genomic_DNA"/>
</dbReference>
<dbReference type="RefSeq" id="NP_079250.1">
    <property type="nucleotide sequence ID" value="NM_024974.2"/>
</dbReference>
<dbReference type="BioMuta" id="FAM106A"/>
<dbReference type="DMDM" id="308153444"/>
<dbReference type="PaxDb" id="9606-ENSP00000437812"/>
<dbReference type="DNASU" id="80039"/>
<dbReference type="UCSC" id="uc002gtz.3">
    <property type="organism name" value="human"/>
</dbReference>
<dbReference type="AGR" id="HGNC:25682"/>
<dbReference type="GeneCards" id="FAM106A"/>
<dbReference type="HGNC" id="HGNC:25682">
    <property type="gene designation" value="FAM106A"/>
</dbReference>
<dbReference type="neXtProt" id="NX_Q4KMX7"/>
<dbReference type="eggNOG" id="ENOG502R1AK">
    <property type="taxonomic scope" value="Eukaryota"/>
</dbReference>
<dbReference type="HOGENOM" id="CLU_1577969_0_0_1"/>
<dbReference type="InParanoid" id="Q4KMX7"/>
<dbReference type="PAN-GO" id="Q4KMX7">
    <property type="GO annotations" value="0 GO annotations based on evolutionary models"/>
</dbReference>
<dbReference type="PhylomeDB" id="Q4KMX7"/>
<dbReference type="TreeFam" id="TF342705"/>
<dbReference type="PathwayCommons" id="Q4KMX7"/>
<dbReference type="BioGRID-ORCS" id="80039">
    <property type="hits" value="17 hits in 93 CRISPR screens"/>
</dbReference>
<dbReference type="GenomeRNAi" id="80039"/>
<dbReference type="Pharos" id="Q4KMX7">
    <property type="development level" value="Tdark"/>
</dbReference>
<dbReference type="PRO" id="PR:Q4KMX7"/>
<dbReference type="Proteomes" id="UP000005640">
    <property type="component" value="Unplaced"/>
</dbReference>
<dbReference type="RNAct" id="Q4KMX7">
    <property type="molecule type" value="protein"/>
</dbReference>
<feature type="chain" id="PRO_0000236183" description="Protein FAM106A">
    <location>
        <begin position="1"/>
        <end position="169"/>
    </location>
</feature>
<evidence type="ECO:0000305" key="1"/>
<proteinExistence type="evidence at transcript level"/>
<gene>
    <name type="primary">FAM106A</name>
</gene>
<name>F106A_HUMAN</name>
<reference key="1">
    <citation type="journal article" date="2004" name="Nat. Genet.">
        <title>Complete sequencing and characterization of 21,243 full-length human cDNAs.</title>
        <authorList>
            <person name="Ota T."/>
            <person name="Suzuki Y."/>
            <person name="Nishikawa T."/>
            <person name="Otsuki T."/>
            <person name="Sugiyama T."/>
            <person name="Irie R."/>
            <person name="Wakamatsu A."/>
            <person name="Hayashi K."/>
            <person name="Sato H."/>
            <person name="Nagai K."/>
            <person name="Kimura K."/>
            <person name="Makita H."/>
            <person name="Sekine M."/>
            <person name="Obayashi M."/>
            <person name="Nishi T."/>
            <person name="Shibahara T."/>
            <person name="Tanaka T."/>
            <person name="Ishii S."/>
            <person name="Yamamoto J."/>
            <person name="Saito K."/>
            <person name="Kawai Y."/>
            <person name="Isono Y."/>
            <person name="Nakamura Y."/>
            <person name="Nagahari K."/>
            <person name="Murakami K."/>
            <person name="Yasuda T."/>
            <person name="Iwayanagi T."/>
            <person name="Wagatsuma M."/>
            <person name="Shiratori A."/>
            <person name="Sudo H."/>
            <person name="Hosoiri T."/>
            <person name="Kaku Y."/>
            <person name="Kodaira H."/>
            <person name="Kondo H."/>
            <person name="Sugawara M."/>
            <person name="Takahashi M."/>
            <person name="Kanda K."/>
            <person name="Yokoi T."/>
            <person name="Furuya T."/>
            <person name="Kikkawa E."/>
            <person name="Omura Y."/>
            <person name="Abe K."/>
            <person name="Kamihara K."/>
            <person name="Katsuta N."/>
            <person name="Sato K."/>
            <person name="Tanikawa M."/>
            <person name="Yamazaki M."/>
            <person name="Ninomiya K."/>
            <person name="Ishibashi T."/>
            <person name="Yamashita H."/>
            <person name="Murakawa K."/>
            <person name="Fujimori K."/>
            <person name="Tanai H."/>
            <person name="Kimata M."/>
            <person name="Watanabe M."/>
            <person name="Hiraoka S."/>
            <person name="Chiba Y."/>
            <person name="Ishida S."/>
            <person name="Ono Y."/>
            <person name="Takiguchi S."/>
            <person name="Watanabe S."/>
            <person name="Yosida M."/>
            <person name="Hotuta T."/>
            <person name="Kusano J."/>
            <person name="Kanehori K."/>
            <person name="Takahashi-Fujii A."/>
            <person name="Hara H."/>
            <person name="Tanase T.-O."/>
            <person name="Nomura Y."/>
            <person name="Togiya S."/>
            <person name="Komai F."/>
            <person name="Hara R."/>
            <person name="Takeuchi K."/>
            <person name="Arita M."/>
            <person name="Imose N."/>
            <person name="Musashino K."/>
            <person name="Yuuki H."/>
            <person name="Oshima A."/>
            <person name="Sasaki N."/>
            <person name="Aotsuka S."/>
            <person name="Yoshikawa Y."/>
            <person name="Matsunawa H."/>
            <person name="Ichihara T."/>
            <person name="Shiohata N."/>
            <person name="Sano S."/>
            <person name="Moriya S."/>
            <person name="Momiyama H."/>
            <person name="Satoh N."/>
            <person name="Takami S."/>
            <person name="Terashima Y."/>
            <person name="Suzuki O."/>
            <person name="Nakagawa S."/>
            <person name="Senoh A."/>
            <person name="Mizoguchi H."/>
            <person name="Goto Y."/>
            <person name="Shimizu F."/>
            <person name="Wakebe H."/>
            <person name="Hishigaki H."/>
            <person name="Watanabe T."/>
            <person name="Sugiyama A."/>
            <person name="Takemoto M."/>
            <person name="Kawakami B."/>
            <person name="Yamazaki M."/>
            <person name="Watanabe K."/>
            <person name="Kumagai A."/>
            <person name="Itakura S."/>
            <person name="Fukuzumi Y."/>
            <person name="Fujimori Y."/>
            <person name="Komiyama M."/>
            <person name="Tashiro H."/>
            <person name="Tanigami A."/>
            <person name="Fujiwara T."/>
            <person name="Ono T."/>
            <person name="Yamada K."/>
            <person name="Fujii Y."/>
            <person name="Ozaki K."/>
            <person name="Hirao M."/>
            <person name="Ohmori Y."/>
            <person name="Kawabata A."/>
            <person name="Hikiji T."/>
            <person name="Kobatake N."/>
            <person name="Inagaki H."/>
            <person name="Ikema Y."/>
            <person name="Okamoto S."/>
            <person name="Okitani R."/>
            <person name="Kawakami T."/>
            <person name="Noguchi S."/>
            <person name="Itoh T."/>
            <person name="Shigeta K."/>
            <person name="Senba T."/>
            <person name="Matsumura K."/>
            <person name="Nakajima Y."/>
            <person name="Mizuno T."/>
            <person name="Morinaga M."/>
            <person name="Sasaki M."/>
            <person name="Togashi T."/>
            <person name="Oyama M."/>
            <person name="Hata H."/>
            <person name="Watanabe M."/>
            <person name="Komatsu T."/>
            <person name="Mizushima-Sugano J."/>
            <person name="Satoh T."/>
            <person name="Shirai Y."/>
            <person name="Takahashi Y."/>
            <person name="Nakagawa K."/>
            <person name="Okumura K."/>
            <person name="Nagase T."/>
            <person name="Nomura N."/>
            <person name="Kikuchi H."/>
            <person name="Masuho Y."/>
            <person name="Yamashita R."/>
            <person name="Nakai K."/>
            <person name="Yada T."/>
            <person name="Nakamura Y."/>
            <person name="Ohara O."/>
            <person name="Isogai T."/>
            <person name="Sugano S."/>
        </authorList>
    </citation>
    <scope>NUCLEOTIDE SEQUENCE [LARGE SCALE MRNA]</scope>
    <source>
        <tissue>Embryo</tissue>
    </source>
</reference>
<reference key="2">
    <citation type="journal article" date="2006" name="Nature">
        <title>DNA sequence of human chromosome 17 and analysis of rearrangement in the human lineage.</title>
        <authorList>
            <person name="Zody M.C."/>
            <person name="Garber M."/>
            <person name="Adams D.J."/>
            <person name="Sharpe T."/>
            <person name="Harrow J."/>
            <person name="Lupski J.R."/>
            <person name="Nicholson C."/>
            <person name="Searle S.M."/>
            <person name="Wilming L."/>
            <person name="Young S.K."/>
            <person name="Abouelleil A."/>
            <person name="Allen N.R."/>
            <person name="Bi W."/>
            <person name="Bloom T."/>
            <person name="Borowsky M.L."/>
            <person name="Bugalter B.E."/>
            <person name="Butler J."/>
            <person name="Chang J.L."/>
            <person name="Chen C.-K."/>
            <person name="Cook A."/>
            <person name="Corum B."/>
            <person name="Cuomo C.A."/>
            <person name="de Jong P.J."/>
            <person name="DeCaprio D."/>
            <person name="Dewar K."/>
            <person name="FitzGerald M."/>
            <person name="Gilbert J."/>
            <person name="Gibson R."/>
            <person name="Gnerre S."/>
            <person name="Goldstein S."/>
            <person name="Grafham D.V."/>
            <person name="Grocock R."/>
            <person name="Hafez N."/>
            <person name="Hagopian D.S."/>
            <person name="Hart E."/>
            <person name="Norman C.H."/>
            <person name="Humphray S."/>
            <person name="Jaffe D.B."/>
            <person name="Jones M."/>
            <person name="Kamal M."/>
            <person name="Khodiyar V.K."/>
            <person name="LaButti K."/>
            <person name="Laird G."/>
            <person name="Lehoczky J."/>
            <person name="Liu X."/>
            <person name="Lokyitsang T."/>
            <person name="Loveland J."/>
            <person name="Lui A."/>
            <person name="Macdonald P."/>
            <person name="Major J.E."/>
            <person name="Matthews L."/>
            <person name="Mauceli E."/>
            <person name="McCarroll S.A."/>
            <person name="Mihalev A.H."/>
            <person name="Mudge J."/>
            <person name="Nguyen C."/>
            <person name="Nicol R."/>
            <person name="O'Leary S.B."/>
            <person name="Osoegawa K."/>
            <person name="Schwartz D.C."/>
            <person name="Shaw-Smith C."/>
            <person name="Stankiewicz P."/>
            <person name="Steward C."/>
            <person name="Swarbreck D."/>
            <person name="Venkataraman V."/>
            <person name="Whittaker C.A."/>
            <person name="Yang X."/>
            <person name="Zimmer A.R."/>
            <person name="Bradley A."/>
            <person name="Hubbard T."/>
            <person name="Birren B.W."/>
            <person name="Rogers J."/>
            <person name="Lander E.S."/>
            <person name="Nusbaum C."/>
        </authorList>
    </citation>
    <scope>NUCLEOTIDE SEQUENCE [LARGE SCALE GENOMIC DNA]</scope>
</reference>
<accession>Q4KMX7</accession>
<accession>Q9HAD1</accession>
<comment type="similarity">
    <text evidence="1">Belongs to the FAM106 family.</text>
</comment>
<organism>
    <name type="scientific">Homo sapiens</name>
    <name type="common">Human</name>
    <dbReference type="NCBI Taxonomy" id="9606"/>
    <lineage>
        <taxon>Eukaryota</taxon>
        <taxon>Metazoa</taxon>
        <taxon>Chordata</taxon>
        <taxon>Craniata</taxon>
        <taxon>Vertebrata</taxon>
        <taxon>Euteleostomi</taxon>
        <taxon>Mammalia</taxon>
        <taxon>Eutheria</taxon>
        <taxon>Euarchontoglires</taxon>
        <taxon>Primates</taxon>
        <taxon>Haplorrhini</taxon>
        <taxon>Catarrhini</taxon>
        <taxon>Hominidae</taxon>
        <taxon>Homo</taxon>
    </lineage>
</organism>
<sequence length="169" mass="18795">MLPSTMFLVHLPLSTNRLHCLRNTSLESYLCSFVHLNHPLHISDRVILISLHEAVRFSFAFSFPRGTLSIAYCLMSSVSTSSEAIMSTELLANYCHSSLHVCICISSFPNETGNHDSFPGAVVSISDQPTDQCKLAAKELPLRNLLECRFFDCMGEEDLINLGVIGTER</sequence>